<sequence length="474" mass="53563">MTKKLHIKTWGCQMNEYDSSKMADLLGSTHGYELTEIAEEADVLLLNTCSIREKAQEKVFHQLGRWKALKDLNPNLIIGVGGCVASQEGAHIRERAHYVDVIFGPQTLHRLPEMINHVQGTRSPIVDISFPEIEKFDRLPEPRADGPTAFVSIMEGCNKYCTFCVVPYTRGEEVSRPCDDVLFEIAQLAAQGVREVNLLGQNVNAYRGETYDGEICSFAELLRLVAAIDGIDRVRFTTSHPIEFTDDIISVYEDTPELVSFLHLPVQSGSDRVLTMMKRRHTALEYKAIIRKLHNARPGILISSDFIIGFPGETQADFEQTMKLIADVNFDMSYSFVYSARPGTPAADMVDDVLEEEKKQRLYLLQDRITKQAMRFSRLMLGTVQRILVEGTSRKSVMELSGRTENNRVVNFEGTPDMIGKFVDVEIVDVYTNSLRGIVVRTEDQMDLRVHESPSSVIARTRKENEIGVGFYQP</sequence>
<organism>
    <name type="scientific">Pectobacterium atrosepticum (strain SCRI 1043 / ATCC BAA-672)</name>
    <name type="common">Erwinia carotovora subsp. atroseptica</name>
    <dbReference type="NCBI Taxonomy" id="218491"/>
    <lineage>
        <taxon>Bacteria</taxon>
        <taxon>Pseudomonadati</taxon>
        <taxon>Pseudomonadota</taxon>
        <taxon>Gammaproteobacteria</taxon>
        <taxon>Enterobacterales</taxon>
        <taxon>Pectobacteriaceae</taxon>
        <taxon>Pectobacterium</taxon>
    </lineage>
</organism>
<gene>
    <name evidence="1" type="primary">miaB</name>
    <name type="ordered locus">ECA1319</name>
</gene>
<name>MIAB_PECAS</name>
<accession>Q6D7K6</accession>
<keyword id="KW-0004">4Fe-4S</keyword>
<keyword id="KW-0963">Cytoplasm</keyword>
<keyword id="KW-0408">Iron</keyword>
<keyword id="KW-0411">Iron-sulfur</keyword>
<keyword id="KW-0479">Metal-binding</keyword>
<keyword id="KW-1185">Reference proteome</keyword>
<keyword id="KW-0949">S-adenosyl-L-methionine</keyword>
<keyword id="KW-0808">Transferase</keyword>
<keyword id="KW-0819">tRNA processing</keyword>
<evidence type="ECO:0000255" key="1">
    <source>
        <dbReference type="HAMAP-Rule" id="MF_01864"/>
    </source>
</evidence>
<evidence type="ECO:0000255" key="2">
    <source>
        <dbReference type="PROSITE-ProRule" id="PRU01266"/>
    </source>
</evidence>
<feature type="chain" id="PRO_0000374278" description="tRNA-2-methylthio-N(6)-dimethylallyladenosine synthase">
    <location>
        <begin position="1"/>
        <end position="474"/>
    </location>
</feature>
<feature type="domain" description="MTTase N-terminal" evidence="1">
    <location>
        <begin position="3"/>
        <end position="120"/>
    </location>
</feature>
<feature type="domain" description="Radical SAM core" evidence="2">
    <location>
        <begin position="143"/>
        <end position="375"/>
    </location>
</feature>
<feature type="domain" description="TRAM" evidence="1">
    <location>
        <begin position="378"/>
        <end position="441"/>
    </location>
</feature>
<feature type="binding site" evidence="1">
    <location>
        <position position="12"/>
    </location>
    <ligand>
        <name>[4Fe-4S] cluster</name>
        <dbReference type="ChEBI" id="CHEBI:49883"/>
        <label>1</label>
    </ligand>
</feature>
<feature type="binding site" evidence="1">
    <location>
        <position position="49"/>
    </location>
    <ligand>
        <name>[4Fe-4S] cluster</name>
        <dbReference type="ChEBI" id="CHEBI:49883"/>
        <label>1</label>
    </ligand>
</feature>
<feature type="binding site" evidence="1">
    <location>
        <position position="83"/>
    </location>
    <ligand>
        <name>[4Fe-4S] cluster</name>
        <dbReference type="ChEBI" id="CHEBI:49883"/>
        <label>1</label>
    </ligand>
</feature>
<feature type="binding site" evidence="1">
    <location>
        <position position="157"/>
    </location>
    <ligand>
        <name>[4Fe-4S] cluster</name>
        <dbReference type="ChEBI" id="CHEBI:49883"/>
        <label>2</label>
        <note>4Fe-4S-S-AdoMet</note>
    </ligand>
</feature>
<feature type="binding site" evidence="1">
    <location>
        <position position="161"/>
    </location>
    <ligand>
        <name>[4Fe-4S] cluster</name>
        <dbReference type="ChEBI" id="CHEBI:49883"/>
        <label>2</label>
        <note>4Fe-4S-S-AdoMet</note>
    </ligand>
</feature>
<feature type="binding site" evidence="1">
    <location>
        <position position="164"/>
    </location>
    <ligand>
        <name>[4Fe-4S] cluster</name>
        <dbReference type="ChEBI" id="CHEBI:49883"/>
        <label>2</label>
        <note>4Fe-4S-S-AdoMet</note>
    </ligand>
</feature>
<protein>
    <recommendedName>
        <fullName evidence="1">tRNA-2-methylthio-N(6)-dimethylallyladenosine synthase</fullName>
        <ecNumber evidence="1">2.8.4.3</ecNumber>
    </recommendedName>
    <alternativeName>
        <fullName evidence="1">(Dimethylallyl)adenosine tRNA methylthiotransferase MiaB</fullName>
    </alternativeName>
    <alternativeName>
        <fullName evidence="1">tRNA-i(6)A37 methylthiotransferase</fullName>
    </alternativeName>
</protein>
<proteinExistence type="inferred from homology"/>
<dbReference type="EC" id="2.8.4.3" evidence="1"/>
<dbReference type="EMBL" id="BX950851">
    <property type="protein sequence ID" value="CAG74229.1"/>
    <property type="molecule type" value="Genomic_DNA"/>
</dbReference>
<dbReference type="RefSeq" id="WP_011092905.1">
    <property type="nucleotide sequence ID" value="NC_004547.2"/>
</dbReference>
<dbReference type="SMR" id="Q6D7K6"/>
<dbReference type="STRING" id="218491.ECA1319"/>
<dbReference type="GeneID" id="57208129"/>
<dbReference type="KEGG" id="eca:ECA1319"/>
<dbReference type="PATRIC" id="fig|218491.5.peg.1347"/>
<dbReference type="eggNOG" id="COG0621">
    <property type="taxonomic scope" value="Bacteria"/>
</dbReference>
<dbReference type="HOGENOM" id="CLU_018697_2_0_6"/>
<dbReference type="OrthoDB" id="9805215at2"/>
<dbReference type="Proteomes" id="UP000007966">
    <property type="component" value="Chromosome"/>
</dbReference>
<dbReference type="GO" id="GO:0005829">
    <property type="term" value="C:cytosol"/>
    <property type="evidence" value="ECO:0007669"/>
    <property type="project" value="TreeGrafter"/>
</dbReference>
<dbReference type="GO" id="GO:0051539">
    <property type="term" value="F:4 iron, 4 sulfur cluster binding"/>
    <property type="evidence" value="ECO:0007669"/>
    <property type="project" value="UniProtKB-UniRule"/>
</dbReference>
<dbReference type="GO" id="GO:0046872">
    <property type="term" value="F:metal ion binding"/>
    <property type="evidence" value="ECO:0007669"/>
    <property type="project" value="UniProtKB-KW"/>
</dbReference>
<dbReference type="GO" id="GO:0035597">
    <property type="term" value="F:N6-isopentenyladenosine methylthiotransferase activity"/>
    <property type="evidence" value="ECO:0007669"/>
    <property type="project" value="TreeGrafter"/>
</dbReference>
<dbReference type="CDD" id="cd01335">
    <property type="entry name" value="Radical_SAM"/>
    <property type="match status" value="1"/>
</dbReference>
<dbReference type="FunFam" id="3.40.50.12160:FF:000001">
    <property type="entry name" value="tRNA-2-methylthio-N(6)-dimethylallyladenosine synthase"/>
    <property type="match status" value="1"/>
</dbReference>
<dbReference type="FunFam" id="3.80.30.20:FF:000001">
    <property type="entry name" value="tRNA-2-methylthio-N(6)-dimethylallyladenosine synthase 2"/>
    <property type="match status" value="1"/>
</dbReference>
<dbReference type="Gene3D" id="3.40.50.12160">
    <property type="entry name" value="Methylthiotransferase, N-terminal domain"/>
    <property type="match status" value="1"/>
</dbReference>
<dbReference type="Gene3D" id="3.80.30.20">
    <property type="entry name" value="tm_1862 like domain"/>
    <property type="match status" value="1"/>
</dbReference>
<dbReference type="HAMAP" id="MF_01864">
    <property type="entry name" value="tRNA_metthiotr_MiaB"/>
    <property type="match status" value="1"/>
</dbReference>
<dbReference type="InterPro" id="IPR006638">
    <property type="entry name" value="Elp3/MiaA/NifB-like_rSAM"/>
</dbReference>
<dbReference type="InterPro" id="IPR005839">
    <property type="entry name" value="Methylthiotransferase"/>
</dbReference>
<dbReference type="InterPro" id="IPR020612">
    <property type="entry name" value="Methylthiotransferase_CS"/>
</dbReference>
<dbReference type="InterPro" id="IPR013848">
    <property type="entry name" value="Methylthiotransferase_N"/>
</dbReference>
<dbReference type="InterPro" id="IPR038135">
    <property type="entry name" value="Methylthiotransferase_N_sf"/>
</dbReference>
<dbReference type="InterPro" id="IPR006463">
    <property type="entry name" value="MiaB_methiolase"/>
</dbReference>
<dbReference type="InterPro" id="IPR007197">
    <property type="entry name" value="rSAM"/>
</dbReference>
<dbReference type="InterPro" id="IPR023404">
    <property type="entry name" value="rSAM_horseshoe"/>
</dbReference>
<dbReference type="InterPro" id="IPR002792">
    <property type="entry name" value="TRAM_dom"/>
</dbReference>
<dbReference type="NCBIfam" id="TIGR01574">
    <property type="entry name" value="miaB-methiolase"/>
    <property type="match status" value="1"/>
</dbReference>
<dbReference type="NCBIfam" id="TIGR00089">
    <property type="entry name" value="MiaB/RimO family radical SAM methylthiotransferase"/>
    <property type="match status" value="1"/>
</dbReference>
<dbReference type="PANTHER" id="PTHR43020">
    <property type="entry name" value="CDK5 REGULATORY SUBUNIT-ASSOCIATED PROTEIN 1"/>
    <property type="match status" value="1"/>
</dbReference>
<dbReference type="PANTHER" id="PTHR43020:SF2">
    <property type="entry name" value="MITOCHONDRIAL TRNA METHYLTHIOTRANSFERASE CDK5RAP1"/>
    <property type="match status" value="1"/>
</dbReference>
<dbReference type="Pfam" id="PF04055">
    <property type="entry name" value="Radical_SAM"/>
    <property type="match status" value="1"/>
</dbReference>
<dbReference type="Pfam" id="PF01938">
    <property type="entry name" value="TRAM"/>
    <property type="match status" value="1"/>
</dbReference>
<dbReference type="Pfam" id="PF00919">
    <property type="entry name" value="UPF0004"/>
    <property type="match status" value="1"/>
</dbReference>
<dbReference type="SFLD" id="SFLDF00273">
    <property type="entry name" value="(dimethylallyl)adenosine_tRNA"/>
    <property type="match status" value="1"/>
</dbReference>
<dbReference type="SFLD" id="SFLDG01082">
    <property type="entry name" value="B12-binding_domain_containing"/>
    <property type="match status" value="1"/>
</dbReference>
<dbReference type="SFLD" id="SFLDG01061">
    <property type="entry name" value="methylthiotransferase"/>
    <property type="match status" value="1"/>
</dbReference>
<dbReference type="SMART" id="SM00729">
    <property type="entry name" value="Elp3"/>
    <property type="match status" value="1"/>
</dbReference>
<dbReference type="SUPFAM" id="SSF102114">
    <property type="entry name" value="Radical SAM enzymes"/>
    <property type="match status" value="1"/>
</dbReference>
<dbReference type="PROSITE" id="PS51449">
    <property type="entry name" value="MTTASE_N"/>
    <property type="match status" value="1"/>
</dbReference>
<dbReference type="PROSITE" id="PS01278">
    <property type="entry name" value="MTTASE_RADICAL"/>
    <property type="match status" value="1"/>
</dbReference>
<dbReference type="PROSITE" id="PS51918">
    <property type="entry name" value="RADICAL_SAM"/>
    <property type="match status" value="1"/>
</dbReference>
<dbReference type="PROSITE" id="PS50926">
    <property type="entry name" value="TRAM"/>
    <property type="match status" value="1"/>
</dbReference>
<reference key="1">
    <citation type="journal article" date="2004" name="Proc. Natl. Acad. Sci. U.S.A.">
        <title>Genome sequence of the enterobacterial phytopathogen Erwinia carotovora subsp. atroseptica and characterization of virulence factors.</title>
        <authorList>
            <person name="Bell K.S."/>
            <person name="Sebaihia M."/>
            <person name="Pritchard L."/>
            <person name="Holden M.T.G."/>
            <person name="Hyman L.J."/>
            <person name="Holeva M.C."/>
            <person name="Thomson N.R."/>
            <person name="Bentley S.D."/>
            <person name="Churcher L.J.C."/>
            <person name="Mungall K."/>
            <person name="Atkin R."/>
            <person name="Bason N."/>
            <person name="Brooks K."/>
            <person name="Chillingworth T."/>
            <person name="Clark K."/>
            <person name="Doggett J."/>
            <person name="Fraser A."/>
            <person name="Hance Z."/>
            <person name="Hauser H."/>
            <person name="Jagels K."/>
            <person name="Moule S."/>
            <person name="Norbertczak H."/>
            <person name="Ormond D."/>
            <person name="Price C."/>
            <person name="Quail M.A."/>
            <person name="Sanders M."/>
            <person name="Walker D."/>
            <person name="Whitehead S."/>
            <person name="Salmond G.P.C."/>
            <person name="Birch P.R.J."/>
            <person name="Parkhill J."/>
            <person name="Toth I.K."/>
        </authorList>
    </citation>
    <scope>NUCLEOTIDE SEQUENCE [LARGE SCALE GENOMIC DNA]</scope>
    <source>
        <strain>SCRI 1043 / ATCC BAA-672</strain>
    </source>
</reference>
<comment type="function">
    <text evidence="1">Catalyzes the methylthiolation of N6-(dimethylallyl)adenosine (i(6)A), leading to the formation of 2-methylthio-N6-(dimethylallyl)adenosine (ms(2)i(6)A) at position 37 in tRNAs that read codons beginning with uridine.</text>
</comment>
<comment type="catalytic activity">
    <reaction evidence="1">
        <text>N(6)-dimethylallyladenosine(37) in tRNA + (sulfur carrier)-SH + AH2 + 2 S-adenosyl-L-methionine = 2-methylsulfanyl-N(6)-dimethylallyladenosine(37) in tRNA + (sulfur carrier)-H + 5'-deoxyadenosine + L-methionine + A + S-adenosyl-L-homocysteine + 2 H(+)</text>
        <dbReference type="Rhea" id="RHEA:37067"/>
        <dbReference type="Rhea" id="RHEA-COMP:10375"/>
        <dbReference type="Rhea" id="RHEA-COMP:10376"/>
        <dbReference type="Rhea" id="RHEA-COMP:14737"/>
        <dbReference type="Rhea" id="RHEA-COMP:14739"/>
        <dbReference type="ChEBI" id="CHEBI:13193"/>
        <dbReference type="ChEBI" id="CHEBI:15378"/>
        <dbReference type="ChEBI" id="CHEBI:17319"/>
        <dbReference type="ChEBI" id="CHEBI:17499"/>
        <dbReference type="ChEBI" id="CHEBI:29917"/>
        <dbReference type="ChEBI" id="CHEBI:57844"/>
        <dbReference type="ChEBI" id="CHEBI:57856"/>
        <dbReference type="ChEBI" id="CHEBI:59789"/>
        <dbReference type="ChEBI" id="CHEBI:64428"/>
        <dbReference type="ChEBI" id="CHEBI:74415"/>
        <dbReference type="ChEBI" id="CHEBI:74417"/>
        <dbReference type="EC" id="2.8.4.3"/>
    </reaction>
</comment>
<comment type="cofactor">
    <cofactor evidence="1">
        <name>[4Fe-4S] cluster</name>
        <dbReference type="ChEBI" id="CHEBI:49883"/>
    </cofactor>
    <text evidence="1">Binds 2 [4Fe-4S] clusters. One cluster is coordinated with 3 cysteines and an exchangeable S-adenosyl-L-methionine.</text>
</comment>
<comment type="subunit">
    <text evidence="1">Monomer.</text>
</comment>
<comment type="subcellular location">
    <subcellularLocation>
        <location evidence="1">Cytoplasm</location>
    </subcellularLocation>
</comment>
<comment type="similarity">
    <text evidence="1">Belongs to the methylthiotransferase family. MiaB subfamily.</text>
</comment>